<keyword id="KW-0175">Coiled coil</keyword>
<keyword id="KW-0963">Cytoplasm</keyword>
<keyword id="KW-0268">Exocytosis</keyword>
<keyword id="KW-0532">Neurotransmitter transport</keyword>
<keyword id="KW-1185">Reference proteome</keyword>
<keyword id="KW-0813">Transport</keyword>
<protein>
    <recommendedName>
        <fullName>Putative complexin-1</fullName>
    </recommendedName>
</protein>
<accession>Q60PP8</accession>
<accession>A8Y1N9</accession>
<comment type="function">
    <text evidence="1">Positively regulates a late step in synaptic vesicle exocytosis.</text>
</comment>
<comment type="subcellular location">
    <subcellularLocation>
        <location evidence="1">Cytoplasm</location>
        <location evidence="1">Cytosol</location>
    </subcellularLocation>
</comment>
<comment type="similarity">
    <text evidence="4">Belongs to the complexin/synaphin family.</text>
</comment>
<sequence>MAGFLMKQMVGNQLNEVTGGLGLKDDGGEKTETGEDPEVVAARLEQEERRKEKHRKMEQEREKMRQGIRDKYAIKKKEEGVAMDFTEGRIGGPRKTPEEIAAEMNAEDDSIIGQLGLTEQVEKAKTMATGAFETVKGFFPFGK</sequence>
<proteinExistence type="inferred from homology"/>
<reference key="1">
    <citation type="journal article" date="2003" name="PLoS Biol.">
        <title>The genome sequence of Caenorhabditis briggsae: a platform for comparative genomics.</title>
        <authorList>
            <person name="Stein L.D."/>
            <person name="Bao Z."/>
            <person name="Blasiar D."/>
            <person name="Blumenthal T."/>
            <person name="Brent M.R."/>
            <person name="Chen N."/>
            <person name="Chinwalla A."/>
            <person name="Clarke L."/>
            <person name="Clee C."/>
            <person name="Coghlan A."/>
            <person name="Coulson A."/>
            <person name="D'Eustachio P."/>
            <person name="Fitch D.H.A."/>
            <person name="Fulton L.A."/>
            <person name="Fulton R.E."/>
            <person name="Griffiths-Jones S."/>
            <person name="Harris T.W."/>
            <person name="Hillier L.W."/>
            <person name="Kamath R."/>
            <person name="Kuwabara P.E."/>
            <person name="Mardis E.R."/>
            <person name="Marra M.A."/>
            <person name="Miner T.L."/>
            <person name="Minx P."/>
            <person name="Mullikin J.C."/>
            <person name="Plumb R.W."/>
            <person name="Rogers J."/>
            <person name="Schein J.E."/>
            <person name="Sohrmann M."/>
            <person name="Spieth J."/>
            <person name="Stajich J.E."/>
            <person name="Wei C."/>
            <person name="Willey D."/>
            <person name="Wilson R.K."/>
            <person name="Durbin R.M."/>
            <person name="Waterston R.H."/>
        </authorList>
    </citation>
    <scope>NUCLEOTIDE SEQUENCE [LARGE SCALE GENOMIC DNA]</scope>
    <source>
        <strain>AF16</strain>
    </source>
</reference>
<evidence type="ECO:0000250" key="1"/>
<evidence type="ECO:0000255" key="2"/>
<evidence type="ECO:0000256" key="3">
    <source>
        <dbReference type="SAM" id="MobiDB-lite"/>
    </source>
</evidence>
<evidence type="ECO:0000305" key="4"/>
<organism>
    <name type="scientific">Caenorhabditis briggsae</name>
    <dbReference type="NCBI Taxonomy" id="6238"/>
    <lineage>
        <taxon>Eukaryota</taxon>
        <taxon>Metazoa</taxon>
        <taxon>Ecdysozoa</taxon>
        <taxon>Nematoda</taxon>
        <taxon>Chromadorea</taxon>
        <taxon>Rhabditida</taxon>
        <taxon>Rhabditina</taxon>
        <taxon>Rhabditomorpha</taxon>
        <taxon>Rhabditoidea</taxon>
        <taxon>Rhabditidae</taxon>
        <taxon>Peloderinae</taxon>
        <taxon>Caenorhabditis</taxon>
    </lineage>
</organism>
<gene>
    <name type="primary">cpx-1</name>
    <name type="ORF">CBG22157</name>
</gene>
<name>CPLX1_CAEBR</name>
<feature type="chain" id="PRO_0000240245" description="Putative complexin-1">
    <location>
        <begin position="1"/>
        <end position="143"/>
    </location>
</feature>
<feature type="region of interest" description="Disordered" evidence="3">
    <location>
        <begin position="15"/>
        <end position="71"/>
    </location>
</feature>
<feature type="coiled-coil region" evidence="2">
    <location>
        <begin position="40"/>
        <end position="71"/>
    </location>
</feature>
<feature type="compositionally biased region" description="Basic and acidic residues" evidence="3">
    <location>
        <begin position="23"/>
        <end position="33"/>
    </location>
</feature>
<feature type="compositionally biased region" description="Basic and acidic residues" evidence="3">
    <location>
        <begin position="44"/>
        <end position="71"/>
    </location>
</feature>
<dbReference type="EMBL" id="HE601428">
    <property type="protein sequence ID" value="CAP38809.1"/>
    <property type="molecule type" value="Genomic_DNA"/>
</dbReference>
<dbReference type="SMR" id="Q60PP8"/>
<dbReference type="FunCoup" id="Q60PP8">
    <property type="interactions" value="418"/>
</dbReference>
<dbReference type="STRING" id="6238.Q60PP8"/>
<dbReference type="EnsemblMetazoa" id="CBG22157.1">
    <property type="protein sequence ID" value="CBG22157.1"/>
    <property type="gene ID" value="WBGene00040779"/>
</dbReference>
<dbReference type="KEGG" id="cbr:CBG_22157"/>
<dbReference type="CTD" id="8580926"/>
<dbReference type="WormBase" id="CBG22157">
    <property type="protein sequence ID" value="CBP05286"/>
    <property type="gene ID" value="WBGene00040779"/>
    <property type="gene designation" value="Cbr-cpx-1"/>
</dbReference>
<dbReference type="eggNOG" id="ENOG502S3I2">
    <property type="taxonomic scope" value="Eukaryota"/>
</dbReference>
<dbReference type="HOGENOM" id="CLU_132159_0_0_1"/>
<dbReference type="InParanoid" id="Q60PP8"/>
<dbReference type="OMA" id="IMKQMVG"/>
<dbReference type="OrthoDB" id="6229630at2759"/>
<dbReference type="Proteomes" id="UP000008549">
    <property type="component" value="Unassembled WGS sequence"/>
</dbReference>
<dbReference type="GO" id="GO:0005829">
    <property type="term" value="C:cytosol"/>
    <property type="evidence" value="ECO:0007669"/>
    <property type="project" value="UniProtKB-SubCell"/>
</dbReference>
<dbReference type="GO" id="GO:0031201">
    <property type="term" value="C:SNARE complex"/>
    <property type="evidence" value="ECO:0000318"/>
    <property type="project" value="GO_Central"/>
</dbReference>
<dbReference type="GO" id="GO:0043195">
    <property type="term" value="C:terminal bouton"/>
    <property type="evidence" value="ECO:0000318"/>
    <property type="project" value="GO_Central"/>
</dbReference>
<dbReference type="GO" id="GO:0000149">
    <property type="term" value="F:SNARE binding"/>
    <property type="evidence" value="ECO:0000318"/>
    <property type="project" value="GO_Central"/>
</dbReference>
<dbReference type="GO" id="GO:0019905">
    <property type="term" value="F:syntaxin binding"/>
    <property type="evidence" value="ECO:0007669"/>
    <property type="project" value="InterPro"/>
</dbReference>
<dbReference type="GO" id="GO:0050804">
    <property type="term" value="P:modulation of chemical synaptic transmission"/>
    <property type="evidence" value="ECO:0000318"/>
    <property type="project" value="GO_Central"/>
</dbReference>
<dbReference type="GO" id="GO:0031630">
    <property type="term" value="P:regulation of synaptic vesicle fusion to presynaptic active zone membrane"/>
    <property type="evidence" value="ECO:0000318"/>
    <property type="project" value="GO_Central"/>
</dbReference>
<dbReference type="GO" id="GO:0016079">
    <property type="term" value="P:synaptic vesicle exocytosis"/>
    <property type="evidence" value="ECO:0000318"/>
    <property type="project" value="GO_Central"/>
</dbReference>
<dbReference type="CDD" id="cd22808">
    <property type="entry name" value="Complexin_NTD_CPLX_I_II"/>
    <property type="match status" value="1"/>
</dbReference>
<dbReference type="FunFam" id="1.20.5.580:FF:000002">
    <property type="entry name" value="Complexin, isoform AB"/>
    <property type="match status" value="1"/>
</dbReference>
<dbReference type="Gene3D" id="1.20.5.580">
    <property type="entry name" value="Single Helix bin"/>
    <property type="match status" value="1"/>
</dbReference>
<dbReference type="InterPro" id="IPR008849">
    <property type="entry name" value="Synaphin"/>
</dbReference>
<dbReference type="PANTHER" id="PTHR16705">
    <property type="entry name" value="COMPLEXIN"/>
    <property type="match status" value="1"/>
</dbReference>
<dbReference type="PANTHER" id="PTHR16705:SF4">
    <property type="entry name" value="COMPLEXIN"/>
    <property type="match status" value="1"/>
</dbReference>
<dbReference type="Pfam" id="PF05835">
    <property type="entry name" value="Synaphin"/>
    <property type="match status" value="1"/>
</dbReference>
<dbReference type="SUPFAM" id="SSF58038">
    <property type="entry name" value="SNARE fusion complex"/>
    <property type="match status" value="1"/>
</dbReference>